<name>PURT_PHOPR</name>
<reference key="1">
    <citation type="journal article" date="2005" name="Science">
        <title>Life at depth: Photobacterium profundum genome sequence and expression analysis.</title>
        <authorList>
            <person name="Vezzi A."/>
            <person name="Campanaro S."/>
            <person name="D'Angelo M."/>
            <person name="Simonato F."/>
            <person name="Vitulo N."/>
            <person name="Lauro F.M."/>
            <person name="Cestaro A."/>
            <person name="Malacrida G."/>
            <person name="Simionati B."/>
            <person name="Cannata N."/>
            <person name="Romualdi C."/>
            <person name="Bartlett D.H."/>
            <person name="Valle G."/>
        </authorList>
    </citation>
    <scope>NUCLEOTIDE SEQUENCE [LARGE SCALE GENOMIC DNA]</scope>
    <source>
        <strain>ATCC BAA-1253 / SS9</strain>
    </source>
</reference>
<feature type="chain" id="PRO_0000319195" description="Formate-dependent phosphoribosylglycinamide formyltransferase">
    <location>
        <begin position="1"/>
        <end position="391"/>
    </location>
</feature>
<feature type="domain" description="ATP-grasp" evidence="1">
    <location>
        <begin position="117"/>
        <end position="306"/>
    </location>
</feature>
<feature type="binding site" evidence="1">
    <location>
        <begin position="20"/>
        <end position="21"/>
    </location>
    <ligand>
        <name>N(1)-(5-phospho-beta-D-ribosyl)glycinamide</name>
        <dbReference type="ChEBI" id="CHEBI:143788"/>
    </ligand>
</feature>
<feature type="binding site" evidence="1">
    <location>
        <position position="80"/>
    </location>
    <ligand>
        <name>N(1)-(5-phospho-beta-D-ribosyl)glycinamide</name>
        <dbReference type="ChEBI" id="CHEBI:143788"/>
    </ligand>
</feature>
<feature type="binding site" evidence="1">
    <location>
        <position position="112"/>
    </location>
    <ligand>
        <name>ATP</name>
        <dbReference type="ChEBI" id="CHEBI:30616"/>
    </ligand>
</feature>
<feature type="binding site" evidence="1">
    <location>
        <position position="153"/>
    </location>
    <ligand>
        <name>ATP</name>
        <dbReference type="ChEBI" id="CHEBI:30616"/>
    </ligand>
</feature>
<feature type="binding site" evidence="1">
    <location>
        <begin position="158"/>
        <end position="163"/>
    </location>
    <ligand>
        <name>ATP</name>
        <dbReference type="ChEBI" id="CHEBI:30616"/>
    </ligand>
</feature>
<feature type="binding site" evidence="1">
    <location>
        <begin position="193"/>
        <end position="196"/>
    </location>
    <ligand>
        <name>ATP</name>
        <dbReference type="ChEBI" id="CHEBI:30616"/>
    </ligand>
</feature>
<feature type="binding site" evidence="1">
    <location>
        <position position="201"/>
    </location>
    <ligand>
        <name>ATP</name>
        <dbReference type="ChEBI" id="CHEBI:30616"/>
    </ligand>
</feature>
<feature type="binding site" evidence="1">
    <location>
        <position position="265"/>
    </location>
    <ligand>
        <name>Mg(2+)</name>
        <dbReference type="ChEBI" id="CHEBI:18420"/>
    </ligand>
</feature>
<feature type="binding site" evidence="1">
    <location>
        <position position="277"/>
    </location>
    <ligand>
        <name>Mg(2+)</name>
        <dbReference type="ChEBI" id="CHEBI:18420"/>
    </ligand>
</feature>
<feature type="binding site" evidence="1">
    <location>
        <position position="284"/>
    </location>
    <ligand>
        <name>N(1)-(5-phospho-beta-D-ribosyl)glycinamide</name>
        <dbReference type="ChEBI" id="CHEBI:143788"/>
    </ligand>
</feature>
<feature type="binding site" evidence="1">
    <location>
        <position position="354"/>
    </location>
    <ligand>
        <name>N(1)-(5-phospho-beta-D-ribosyl)glycinamide</name>
        <dbReference type="ChEBI" id="CHEBI:143788"/>
    </ligand>
</feature>
<feature type="binding site" evidence="1">
    <location>
        <begin position="361"/>
        <end position="362"/>
    </location>
    <ligand>
        <name>N(1)-(5-phospho-beta-D-ribosyl)glycinamide</name>
        <dbReference type="ChEBI" id="CHEBI:143788"/>
    </ligand>
</feature>
<proteinExistence type="inferred from homology"/>
<evidence type="ECO:0000255" key="1">
    <source>
        <dbReference type="HAMAP-Rule" id="MF_01643"/>
    </source>
</evidence>
<dbReference type="EC" id="6.3.1.21" evidence="1"/>
<dbReference type="EMBL" id="CR378668">
    <property type="protein sequence ID" value="CAG20092.1"/>
    <property type="molecule type" value="Genomic_DNA"/>
</dbReference>
<dbReference type="RefSeq" id="WP_011218404.1">
    <property type="nucleotide sequence ID" value="NC_006370.1"/>
</dbReference>
<dbReference type="SMR" id="Q6LRI4"/>
<dbReference type="STRING" id="298386.PBPRA1685"/>
<dbReference type="KEGG" id="ppr:PBPRA1685"/>
<dbReference type="eggNOG" id="COG0027">
    <property type="taxonomic scope" value="Bacteria"/>
</dbReference>
<dbReference type="HOGENOM" id="CLU_011534_1_3_6"/>
<dbReference type="UniPathway" id="UPA00074">
    <property type="reaction ID" value="UER00127"/>
</dbReference>
<dbReference type="Proteomes" id="UP000000593">
    <property type="component" value="Chromosome 1"/>
</dbReference>
<dbReference type="GO" id="GO:0005829">
    <property type="term" value="C:cytosol"/>
    <property type="evidence" value="ECO:0007669"/>
    <property type="project" value="TreeGrafter"/>
</dbReference>
<dbReference type="GO" id="GO:0005524">
    <property type="term" value="F:ATP binding"/>
    <property type="evidence" value="ECO:0007669"/>
    <property type="project" value="UniProtKB-UniRule"/>
</dbReference>
<dbReference type="GO" id="GO:0000287">
    <property type="term" value="F:magnesium ion binding"/>
    <property type="evidence" value="ECO:0007669"/>
    <property type="project" value="InterPro"/>
</dbReference>
<dbReference type="GO" id="GO:0043815">
    <property type="term" value="F:phosphoribosylglycinamide formyltransferase 2 activity"/>
    <property type="evidence" value="ECO:0007669"/>
    <property type="project" value="UniProtKB-UniRule"/>
</dbReference>
<dbReference type="GO" id="GO:0004644">
    <property type="term" value="F:phosphoribosylglycinamide formyltransferase activity"/>
    <property type="evidence" value="ECO:0007669"/>
    <property type="project" value="InterPro"/>
</dbReference>
<dbReference type="GO" id="GO:0006189">
    <property type="term" value="P:'de novo' IMP biosynthetic process"/>
    <property type="evidence" value="ECO:0007669"/>
    <property type="project" value="UniProtKB-UniRule"/>
</dbReference>
<dbReference type="FunFam" id="3.30.1490.20:FF:000013">
    <property type="entry name" value="Formate-dependent phosphoribosylglycinamide formyltransferase"/>
    <property type="match status" value="1"/>
</dbReference>
<dbReference type="FunFam" id="3.30.470.20:FF:000027">
    <property type="entry name" value="Formate-dependent phosphoribosylglycinamide formyltransferase"/>
    <property type="match status" value="1"/>
</dbReference>
<dbReference type="FunFam" id="3.40.50.20:FF:000007">
    <property type="entry name" value="Formate-dependent phosphoribosylglycinamide formyltransferase"/>
    <property type="match status" value="1"/>
</dbReference>
<dbReference type="Gene3D" id="3.40.50.20">
    <property type="match status" value="1"/>
</dbReference>
<dbReference type="Gene3D" id="3.30.1490.20">
    <property type="entry name" value="ATP-grasp fold, A domain"/>
    <property type="match status" value="1"/>
</dbReference>
<dbReference type="Gene3D" id="3.30.470.20">
    <property type="entry name" value="ATP-grasp fold, B domain"/>
    <property type="match status" value="1"/>
</dbReference>
<dbReference type="HAMAP" id="MF_01643">
    <property type="entry name" value="PurT"/>
    <property type="match status" value="1"/>
</dbReference>
<dbReference type="InterPro" id="IPR011761">
    <property type="entry name" value="ATP-grasp"/>
</dbReference>
<dbReference type="InterPro" id="IPR003135">
    <property type="entry name" value="ATP-grasp_carboxylate-amine"/>
</dbReference>
<dbReference type="InterPro" id="IPR013815">
    <property type="entry name" value="ATP_grasp_subdomain_1"/>
</dbReference>
<dbReference type="InterPro" id="IPR016185">
    <property type="entry name" value="PreATP-grasp_dom_sf"/>
</dbReference>
<dbReference type="InterPro" id="IPR005862">
    <property type="entry name" value="PurT"/>
</dbReference>
<dbReference type="InterPro" id="IPR054350">
    <property type="entry name" value="PurT/PurK_preATP-grasp"/>
</dbReference>
<dbReference type="InterPro" id="IPR048740">
    <property type="entry name" value="PurT_C"/>
</dbReference>
<dbReference type="InterPro" id="IPR011054">
    <property type="entry name" value="Rudment_hybrid_motif"/>
</dbReference>
<dbReference type="NCBIfam" id="NF006766">
    <property type="entry name" value="PRK09288.1"/>
    <property type="match status" value="1"/>
</dbReference>
<dbReference type="NCBIfam" id="TIGR01142">
    <property type="entry name" value="purT"/>
    <property type="match status" value="1"/>
</dbReference>
<dbReference type="PANTHER" id="PTHR43055">
    <property type="entry name" value="FORMATE-DEPENDENT PHOSPHORIBOSYLGLYCINAMIDE FORMYLTRANSFERASE"/>
    <property type="match status" value="1"/>
</dbReference>
<dbReference type="PANTHER" id="PTHR43055:SF1">
    <property type="entry name" value="FORMATE-DEPENDENT PHOSPHORIBOSYLGLYCINAMIDE FORMYLTRANSFERASE"/>
    <property type="match status" value="1"/>
</dbReference>
<dbReference type="Pfam" id="PF02222">
    <property type="entry name" value="ATP-grasp"/>
    <property type="match status" value="1"/>
</dbReference>
<dbReference type="Pfam" id="PF21244">
    <property type="entry name" value="PurT_C"/>
    <property type="match status" value="1"/>
</dbReference>
<dbReference type="Pfam" id="PF22660">
    <property type="entry name" value="RS_preATP-grasp-like"/>
    <property type="match status" value="1"/>
</dbReference>
<dbReference type="SUPFAM" id="SSF56059">
    <property type="entry name" value="Glutathione synthetase ATP-binding domain-like"/>
    <property type="match status" value="1"/>
</dbReference>
<dbReference type="SUPFAM" id="SSF52440">
    <property type="entry name" value="PreATP-grasp domain"/>
    <property type="match status" value="1"/>
</dbReference>
<dbReference type="SUPFAM" id="SSF51246">
    <property type="entry name" value="Rudiment single hybrid motif"/>
    <property type="match status" value="1"/>
</dbReference>
<dbReference type="PROSITE" id="PS50975">
    <property type="entry name" value="ATP_GRASP"/>
    <property type="match status" value="1"/>
</dbReference>
<keyword id="KW-0067">ATP-binding</keyword>
<keyword id="KW-0436">Ligase</keyword>
<keyword id="KW-0460">Magnesium</keyword>
<keyword id="KW-0479">Metal-binding</keyword>
<keyword id="KW-0547">Nucleotide-binding</keyword>
<keyword id="KW-0658">Purine biosynthesis</keyword>
<keyword id="KW-1185">Reference proteome</keyword>
<gene>
    <name evidence="1" type="primary">purT</name>
    <name type="synonym">stm1883</name>
    <name type="ordered locus">PBPRA1685</name>
</gene>
<sequence>MFGSATRSDATRVLLLGSGELGKEVAIECQRLGLEVIAVDRYDNAPAMQVAHRSHVIDMLDGDALRKLIELEQPHYVVPEIEAIATDTLVSLEAEGVNIVPTANATKLTMNREGIRRLAAEDLQIPTSPFEFADQYDDFVAAVERVGTPCVVKPIMSSSGKGQSVIKTPADIEASWQYAQEGGRAGTGRVVVEGFIKFDYEITLLTTRAVDGIHFCAPIGHRQEEGDYRESWQPQQMSDEALKAAQDVAEKVVNALGGYGLFGVELFVRGNEVLFNEVSPRPHDTGMVTLISQDLSEFALHVRAFLGLPIQQIIQYGPAASAVILGNGISSNIRFDNLTAALSRPQTQVRLFGKPEINGRRRLGVALTRREDTKQAVSDAINAAADVKVIY</sequence>
<comment type="function">
    <text evidence="1">Involved in the de novo purine biosynthesis. Catalyzes the transfer of formate to 5-phospho-ribosyl-glycinamide (GAR), producing 5-phospho-ribosyl-N-formylglycinamide (FGAR). Formate is provided by PurU via hydrolysis of 10-formyl-tetrahydrofolate.</text>
</comment>
<comment type="catalytic activity">
    <reaction evidence="1">
        <text>N(1)-(5-phospho-beta-D-ribosyl)glycinamide + formate + ATP = N(2)-formyl-N(1)-(5-phospho-beta-D-ribosyl)glycinamide + ADP + phosphate + H(+)</text>
        <dbReference type="Rhea" id="RHEA:24829"/>
        <dbReference type="ChEBI" id="CHEBI:15378"/>
        <dbReference type="ChEBI" id="CHEBI:15740"/>
        <dbReference type="ChEBI" id="CHEBI:30616"/>
        <dbReference type="ChEBI" id="CHEBI:43474"/>
        <dbReference type="ChEBI" id="CHEBI:143788"/>
        <dbReference type="ChEBI" id="CHEBI:147286"/>
        <dbReference type="ChEBI" id="CHEBI:456216"/>
        <dbReference type="EC" id="6.3.1.21"/>
    </reaction>
    <physiologicalReaction direction="left-to-right" evidence="1">
        <dbReference type="Rhea" id="RHEA:24830"/>
    </physiologicalReaction>
</comment>
<comment type="pathway">
    <text evidence="1">Purine metabolism; IMP biosynthesis via de novo pathway; N(2)-formyl-N(1)-(5-phospho-D-ribosyl)glycinamide from N(1)-(5-phospho-D-ribosyl)glycinamide (formate route): step 1/1.</text>
</comment>
<comment type="subunit">
    <text evidence="1">Homodimer.</text>
</comment>
<comment type="similarity">
    <text evidence="1">Belongs to the PurK/PurT family.</text>
</comment>
<protein>
    <recommendedName>
        <fullName evidence="1">Formate-dependent phosphoribosylglycinamide formyltransferase</fullName>
        <ecNumber evidence="1">6.3.1.21</ecNumber>
    </recommendedName>
    <alternativeName>
        <fullName evidence="1">5'-phosphoribosylglycinamide transformylase 2</fullName>
    </alternativeName>
    <alternativeName>
        <fullName evidence="1">Formate-dependent GAR transformylase</fullName>
    </alternativeName>
    <alternativeName>
        <fullName evidence="1">GAR transformylase 2</fullName>
        <shortName evidence="1">GART 2</shortName>
    </alternativeName>
    <alternativeName>
        <fullName evidence="1">Non-folate glycinamide ribonucleotide transformylase</fullName>
    </alternativeName>
    <alternativeName>
        <fullName evidence="1">Phosphoribosylglycinamide formyltransferase 2</fullName>
    </alternativeName>
</protein>
<organism>
    <name type="scientific">Photobacterium profundum (strain SS9)</name>
    <dbReference type="NCBI Taxonomy" id="298386"/>
    <lineage>
        <taxon>Bacteria</taxon>
        <taxon>Pseudomonadati</taxon>
        <taxon>Pseudomonadota</taxon>
        <taxon>Gammaproteobacteria</taxon>
        <taxon>Vibrionales</taxon>
        <taxon>Vibrionaceae</taxon>
        <taxon>Photobacterium</taxon>
    </lineage>
</organism>
<accession>Q6LRI4</accession>